<sequence>MAAPSSLLLAALLWVPAEALSCYGDSGRPVDWFVVYKLPANSGSGDKPWKGLMYKYMDQNSEGWQDGVGHIDSKDGAVGLTLQPLYQKNSSQLAFLLYNDQPPKSSSAQDSSSRGHTKGVLLLDQEGGFWLVHSVPRFPSPASSGAYSWPPNARTYGQTLLCVSLPFSQFPGIGKQLTYTYPLVYDHKLEGIFAQKLPDLEEVTKGHHVLREPWNSSVILTSRAGTTFQSFAKFGKFGDDLYSGWLAAALGTNLQVQFWPNSPGILPSNCSGTHKILDVTETGFPGPSGPTFNATEDHSKWCVAPEGPWVCVGDMNRNKRETHRGGGTLCTQVPALWKAFRSLVKACKPC</sequence>
<dbReference type="EC" id="3.1.22.1"/>
<dbReference type="EMBL" id="AF178975">
    <property type="protein sequence ID" value="AAF13597.1"/>
    <property type="molecule type" value="mRNA"/>
</dbReference>
<dbReference type="EMBL" id="BC091124">
    <property type="protein sequence ID" value="AAH91124.1"/>
    <property type="molecule type" value="mRNA"/>
</dbReference>
<dbReference type="RefSeq" id="NP_612548.1">
    <property type="nucleotide sequence ID" value="NM_138539.3"/>
</dbReference>
<dbReference type="SMR" id="Q9QZK8"/>
<dbReference type="FunCoup" id="Q9QZK8">
    <property type="interactions" value="543"/>
</dbReference>
<dbReference type="STRING" id="10116.ENSRNOP00000014887"/>
<dbReference type="GlyCosmos" id="Q9QZK8">
    <property type="glycosylation" value="4 sites, No reported glycans"/>
</dbReference>
<dbReference type="GlyGen" id="Q9QZK8">
    <property type="glycosylation" value="4 sites"/>
</dbReference>
<dbReference type="PhosphoSitePlus" id="Q9QZK8"/>
<dbReference type="PaxDb" id="10116-ENSRNOP00000014887"/>
<dbReference type="Ensembl" id="ENSRNOT00000014887.6">
    <property type="protein sequence ID" value="ENSRNOP00000014887.3"/>
    <property type="gene ID" value="ENSRNOG00000023830.5"/>
</dbReference>
<dbReference type="GeneID" id="171575"/>
<dbReference type="KEGG" id="rno:171575"/>
<dbReference type="AGR" id="RGD:621457"/>
<dbReference type="CTD" id="1777"/>
<dbReference type="RGD" id="621457">
    <property type="gene designation" value="Dnase2"/>
</dbReference>
<dbReference type="eggNOG" id="KOG3825">
    <property type="taxonomic scope" value="Eukaryota"/>
</dbReference>
<dbReference type="GeneTree" id="ENSGT00390000002634"/>
<dbReference type="HOGENOM" id="CLU_053867_0_0_1"/>
<dbReference type="InParanoid" id="Q9QZK8"/>
<dbReference type="OMA" id="EMYLLLE"/>
<dbReference type="OrthoDB" id="10261598at2759"/>
<dbReference type="PhylomeDB" id="Q9QZK8"/>
<dbReference type="TreeFam" id="TF314536"/>
<dbReference type="BRENDA" id="3.1.22.1">
    <property type="organism ID" value="5301"/>
</dbReference>
<dbReference type="Reactome" id="R-RNO-432720">
    <property type="pathway name" value="Lysosome Vesicle Biogenesis"/>
</dbReference>
<dbReference type="PRO" id="PR:Q9QZK8"/>
<dbReference type="Proteomes" id="UP000002494">
    <property type="component" value="Chromosome 19"/>
</dbReference>
<dbReference type="Bgee" id="ENSRNOG00000023830">
    <property type="expression patterns" value="Expressed in pancreas and 19 other cell types or tissues"/>
</dbReference>
<dbReference type="GO" id="GO:0005764">
    <property type="term" value="C:lysosome"/>
    <property type="evidence" value="ECO:0007669"/>
    <property type="project" value="UniProtKB-SubCell"/>
</dbReference>
<dbReference type="GO" id="GO:0004531">
    <property type="term" value="F:deoxyribonuclease II activity"/>
    <property type="evidence" value="ECO:0000266"/>
    <property type="project" value="RGD"/>
</dbReference>
<dbReference type="GO" id="GO:0004520">
    <property type="term" value="F:DNA endonuclease activity"/>
    <property type="evidence" value="ECO:0000314"/>
    <property type="project" value="RGD"/>
</dbReference>
<dbReference type="GO" id="GO:0006309">
    <property type="term" value="P:apoptotic DNA fragmentation"/>
    <property type="evidence" value="ECO:0000318"/>
    <property type="project" value="GO_Central"/>
</dbReference>
<dbReference type="GO" id="GO:0006308">
    <property type="term" value="P:DNA catabolic process"/>
    <property type="evidence" value="ECO:0000266"/>
    <property type="project" value="RGD"/>
</dbReference>
<dbReference type="GO" id="GO:0043353">
    <property type="term" value="P:enucleate erythrocyte differentiation"/>
    <property type="evidence" value="ECO:0000266"/>
    <property type="project" value="RGD"/>
</dbReference>
<dbReference type="GO" id="GO:0050776">
    <property type="term" value="P:regulation of immune response"/>
    <property type="evidence" value="ECO:0000266"/>
    <property type="project" value="RGD"/>
</dbReference>
<dbReference type="InterPro" id="IPR004947">
    <property type="entry name" value="DNase_II"/>
</dbReference>
<dbReference type="PANTHER" id="PTHR10858">
    <property type="entry name" value="DEOXYRIBONUCLEASE II"/>
    <property type="match status" value="1"/>
</dbReference>
<dbReference type="PANTHER" id="PTHR10858:SF9">
    <property type="entry name" value="DEOXYRIBONUCLEASE-2-ALPHA"/>
    <property type="match status" value="1"/>
</dbReference>
<dbReference type="Pfam" id="PF03265">
    <property type="entry name" value="DNase_II"/>
    <property type="match status" value="1"/>
</dbReference>
<name>DNS2A_RAT</name>
<evidence type="ECO:0000250" key="1"/>
<evidence type="ECO:0000250" key="2">
    <source>
        <dbReference type="UniProtKB" id="O00115"/>
    </source>
</evidence>
<evidence type="ECO:0000255" key="3"/>
<evidence type="ECO:0000269" key="4">
    <source>
    </source>
</evidence>
<evidence type="ECO:0000305" key="5"/>
<keyword id="KW-0053">Apoptosis</keyword>
<keyword id="KW-0217">Developmental protein</keyword>
<keyword id="KW-1015">Disulfide bond</keyword>
<keyword id="KW-0255">Endonuclease</keyword>
<keyword id="KW-0325">Glycoprotein</keyword>
<keyword id="KW-0378">Hydrolase</keyword>
<keyword id="KW-0458">Lysosome</keyword>
<keyword id="KW-0540">Nuclease</keyword>
<keyword id="KW-1185">Reference proteome</keyword>
<keyword id="KW-0732">Signal</keyword>
<comment type="function">
    <text evidence="2">Hydrolyzes DNA under acidic conditions with a preference for double-stranded DNA. Plays a major role in the clearance of nucleic acids generated through apoptosis, hence preventing autoinflammation. Necessary for proper fetal development and for definitive erythropoiesis in fetal liver and bone marrow, where it degrades nuclear DNA expelled from erythroid precursor cells.</text>
</comment>
<comment type="catalytic activity">
    <reaction evidence="2">
        <text>Endonucleolytic cleavage to nucleoside 3'-phosphates and 3'-phosphooligonucleotide end-products.</text>
        <dbReference type="EC" id="3.1.22.1"/>
    </reaction>
</comment>
<comment type="subcellular location">
    <subcellularLocation>
        <location evidence="1">Lysosome</location>
    </subcellularLocation>
</comment>
<comment type="tissue specificity">
    <text evidence="4">Ubiquitous.</text>
</comment>
<comment type="similarity">
    <text evidence="5">Belongs to the DNase II family.</text>
</comment>
<reference key="1">
    <citation type="journal article" date="1999" name="Biochem. Biophys. Res. Commun.">
        <title>Cloning of a cDNA encoding a rat DNase II-like acid DNase.</title>
        <authorList>
            <person name="Tanuma S."/>
            <person name="Shiokawa D."/>
        </authorList>
    </citation>
    <scope>NUCLEOTIDE SEQUENCE [MRNA]</scope>
    <scope>TISSUE SPECIFICITY</scope>
    <source>
        <strain>Wistar</strain>
        <tissue>Liver</tissue>
    </source>
</reference>
<reference key="2">
    <citation type="journal article" date="2004" name="Genome Res.">
        <title>The status, quality, and expansion of the NIH full-length cDNA project: the Mammalian Gene Collection (MGC).</title>
        <authorList>
            <consortium name="The MGC Project Team"/>
        </authorList>
    </citation>
    <scope>NUCLEOTIDE SEQUENCE [LARGE SCALE MRNA]</scope>
    <source>
        <tissue>Spleen</tissue>
    </source>
</reference>
<protein>
    <recommendedName>
        <fullName>Deoxyribonuclease-2-alpha</fullName>
        <ecNumber>3.1.22.1</ecNumber>
    </recommendedName>
    <alternativeName>
        <fullName>Acid DNase</fullName>
    </alternativeName>
    <alternativeName>
        <fullName>Deoxyribonuclease II alpha</fullName>
        <shortName>DNase II alpha</shortName>
    </alternativeName>
    <alternativeName>
        <fullName>Lysosomal DNase II</fullName>
    </alternativeName>
</protein>
<organism>
    <name type="scientific">Rattus norvegicus</name>
    <name type="common">Rat</name>
    <dbReference type="NCBI Taxonomy" id="10116"/>
    <lineage>
        <taxon>Eukaryota</taxon>
        <taxon>Metazoa</taxon>
        <taxon>Chordata</taxon>
        <taxon>Craniata</taxon>
        <taxon>Vertebrata</taxon>
        <taxon>Euteleostomi</taxon>
        <taxon>Mammalia</taxon>
        <taxon>Eutheria</taxon>
        <taxon>Euarchontoglires</taxon>
        <taxon>Glires</taxon>
        <taxon>Rodentia</taxon>
        <taxon>Myomorpha</taxon>
        <taxon>Muroidea</taxon>
        <taxon>Muridae</taxon>
        <taxon>Murinae</taxon>
        <taxon>Rattus</taxon>
    </lineage>
</organism>
<accession>Q9QZK8</accession>
<accession>Q5BKC7</accession>
<gene>
    <name type="primary">Dnase2</name>
    <name type="synonym">Dnase2a</name>
    <name type="synonym">Dnl2</name>
</gene>
<proteinExistence type="evidence at transcript level"/>
<feature type="signal peptide" evidence="3">
    <location>
        <begin position="1"/>
        <end position="19"/>
    </location>
</feature>
<feature type="chain" id="PRO_0000007294" description="Deoxyribonuclease-2-alpha">
    <location>
        <begin position="20"/>
        <end position="350"/>
    </location>
</feature>
<feature type="active site" evidence="1">
    <location>
        <position position="298"/>
    </location>
</feature>
<feature type="glycosylation site" description="N-linked (GlcNAc...) asparagine" evidence="1">
    <location>
        <position position="89"/>
    </location>
</feature>
<feature type="glycosylation site" description="N-linked (GlcNAc...) asparagine" evidence="1">
    <location>
        <position position="215"/>
    </location>
</feature>
<feature type="glycosylation site" description="N-linked (GlcNAc...) asparagine" evidence="1">
    <location>
        <position position="269"/>
    </location>
</feature>
<feature type="glycosylation site" description="N-linked (GlcNAc...) asparagine" evidence="1">
    <location>
        <position position="293"/>
    </location>
</feature>
<feature type="disulfide bond" evidence="3">
    <location>
        <begin position="22"/>
        <end position="162"/>
    </location>
</feature>
<feature type="disulfide bond" evidence="3">
    <location>
        <begin position="270"/>
        <end position="350"/>
    </location>
</feature>
<feature type="disulfide bond" evidence="3">
    <location>
        <begin position="311"/>
        <end position="330"/>
    </location>
</feature>